<organism>
    <name type="scientific">Bacillus subtilis (strain 168)</name>
    <dbReference type="NCBI Taxonomy" id="224308"/>
    <lineage>
        <taxon>Bacteria</taxon>
        <taxon>Bacillati</taxon>
        <taxon>Bacillota</taxon>
        <taxon>Bacilli</taxon>
        <taxon>Bacillales</taxon>
        <taxon>Bacillaceae</taxon>
        <taxon>Bacillus</taxon>
    </lineage>
</organism>
<proteinExistence type="inferred from homology"/>
<feature type="chain" id="PRO_0000172801" description="Uncharacterized protein YceH">
    <location>
        <begin position="1"/>
        <end position="363"/>
    </location>
</feature>
<dbReference type="EMBL" id="AB000617">
    <property type="protein sequence ID" value="BAA22255.1"/>
    <property type="molecule type" value="Genomic_DNA"/>
</dbReference>
<dbReference type="EMBL" id="AL009126">
    <property type="protein sequence ID" value="CAB12088.1"/>
    <property type="molecule type" value="Genomic_DNA"/>
</dbReference>
<dbReference type="PIR" id="B69757">
    <property type="entry name" value="B69757"/>
</dbReference>
<dbReference type="RefSeq" id="NP_388176.1">
    <property type="nucleotide sequence ID" value="NC_000964.3"/>
</dbReference>
<dbReference type="RefSeq" id="WP_003234715.1">
    <property type="nucleotide sequence ID" value="NZ_OZ025638.1"/>
</dbReference>
<dbReference type="SMR" id="O34833"/>
<dbReference type="FunCoup" id="O34833">
    <property type="interactions" value="7"/>
</dbReference>
<dbReference type="IntAct" id="O34833">
    <property type="interactions" value="1"/>
</dbReference>
<dbReference type="MINT" id="O34833"/>
<dbReference type="STRING" id="224308.BSU02940"/>
<dbReference type="jPOST" id="O34833"/>
<dbReference type="PaxDb" id="224308-BSU02940"/>
<dbReference type="EnsemblBacteria" id="CAB12088">
    <property type="protein sequence ID" value="CAB12088"/>
    <property type="gene ID" value="BSU_02940"/>
</dbReference>
<dbReference type="GeneID" id="938366"/>
<dbReference type="KEGG" id="bsu:BSU02940"/>
<dbReference type="PATRIC" id="fig|224308.179.peg.306"/>
<dbReference type="eggNOG" id="COG3853">
    <property type="taxonomic scope" value="Bacteria"/>
</dbReference>
<dbReference type="InParanoid" id="O34833"/>
<dbReference type="OrthoDB" id="9768858at2"/>
<dbReference type="PhylomeDB" id="O34833"/>
<dbReference type="BioCyc" id="BSUB:BSU02940-MONOMER"/>
<dbReference type="Proteomes" id="UP000001570">
    <property type="component" value="Chromosome"/>
</dbReference>
<dbReference type="InterPro" id="IPR008863">
    <property type="entry name" value="Toxic_anion-R_TelA"/>
</dbReference>
<dbReference type="PANTHER" id="PTHR38432">
    <property type="entry name" value="TELA-LIKE PROTEIN SAOUHSC_01408"/>
    <property type="match status" value="1"/>
</dbReference>
<dbReference type="PANTHER" id="PTHR38432:SF2">
    <property type="entry name" value="TELLURITE RESISTANCE PROTEIN"/>
    <property type="match status" value="1"/>
</dbReference>
<dbReference type="Pfam" id="PF05816">
    <property type="entry name" value="TelA"/>
    <property type="match status" value="1"/>
</dbReference>
<dbReference type="PIRSF" id="PIRSF026508">
    <property type="entry name" value="TelA"/>
    <property type="match status" value="1"/>
</dbReference>
<protein>
    <recommendedName>
        <fullName>Uncharacterized protein YceH</fullName>
    </recommendedName>
</protein>
<reference key="1">
    <citation type="journal article" date="1997" name="Microbiology">
        <title>A 32 kb nucleotide sequence from the region of the lincomycin-resistance gene (22 degrees-25 degrees) of the Bacillus subtilis chromosome and identification of the site of the lin-2 mutation.</title>
        <authorList>
            <person name="Kumano M."/>
            <person name="Tamakoshi A."/>
            <person name="Yamane K."/>
        </authorList>
    </citation>
    <scope>NUCLEOTIDE SEQUENCE [GENOMIC DNA]</scope>
    <source>
        <strain>168</strain>
    </source>
</reference>
<reference key="2">
    <citation type="journal article" date="1997" name="Nature">
        <title>The complete genome sequence of the Gram-positive bacterium Bacillus subtilis.</title>
        <authorList>
            <person name="Kunst F."/>
            <person name="Ogasawara N."/>
            <person name="Moszer I."/>
            <person name="Albertini A.M."/>
            <person name="Alloni G."/>
            <person name="Azevedo V."/>
            <person name="Bertero M.G."/>
            <person name="Bessieres P."/>
            <person name="Bolotin A."/>
            <person name="Borchert S."/>
            <person name="Borriss R."/>
            <person name="Boursier L."/>
            <person name="Brans A."/>
            <person name="Braun M."/>
            <person name="Brignell S.C."/>
            <person name="Bron S."/>
            <person name="Brouillet S."/>
            <person name="Bruschi C.V."/>
            <person name="Caldwell B."/>
            <person name="Capuano V."/>
            <person name="Carter N.M."/>
            <person name="Choi S.-K."/>
            <person name="Codani J.-J."/>
            <person name="Connerton I.F."/>
            <person name="Cummings N.J."/>
            <person name="Daniel R.A."/>
            <person name="Denizot F."/>
            <person name="Devine K.M."/>
            <person name="Duesterhoeft A."/>
            <person name="Ehrlich S.D."/>
            <person name="Emmerson P.T."/>
            <person name="Entian K.-D."/>
            <person name="Errington J."/>
            <person name="Fabret C."/>
            <person name="Ferrari E."/>
            <person name="Foulger D."/>
            <person name="Fritz C."/>
            <person name="Fujita M."/>
            <person name="Fujita Y."/>
            <person name="Fuma S."/>
            <person name="Galizzi A."/>
            <person name="Galleron N."/>
            <person name="Ghim S.-Y."/>
            <person name="Glaser P."/>
            <person name="Goffeau A."/>
            <person name="Golightly E.J."/>
            <person name="Grandi G."/>
            <person name="Guiseppi G."/>
            <person name="Guy B.J."/>
            <person name="Haga K."/>
            <person name="Haiech J."/>
            <person name="Harwood C.R."/>
            <person name="Henaut A."/>
            <person name="Hilbert H."/>
            <person name="Holsappel S."/>
            <person name="Hosono S."/>
            <person name="Hullo M.-F."/>
            <person name="Itaya M."/>
            <person name="Jones L.-M."/>
            <person name="Joris B."/>
            <person name="Karamata D."/>
            <person name="Kasahara Y."/>
            <person name="Klaerr-Blanchard M."/>
            <person name="Klein C."/>
            <person name="Kobayashi Y."/>
            <person name="Koetter P."/>
            <person name="Koningstein G."/>
            <person name="Krogh S."/>
            <person name="Kumano M."/>
            <person name="Kurita K."/>
            <person name="Lapidus A."/>
            <person name="Lardinois S."/>
            <person name="Lauber J."/>
            <person name="Lazarevic V."/>
            <person name="Lee S.-M."/>
            <person name="Levine A."/>
            <person name="Liu H."/>
            <person name="Masuda S."/>
            <person name="Mauel C."/>
            <person name="Medigue C."/>
            <person name="Medina N."/>
            <person name="Mellado R.P."/>
            <person name="Mizuno M."/>
            <person name="Moestl D."/>
            <person name="Nakai S."/>
            <person name="Noback M."/>
            <person name="Noone D."/>
            <person name="O'Reilly M."/>
            <person name="Ogawa K."/>
            <person name="Ogiwara A."/>
            <person name="Oudega B."/>
            <person name="Park S.-H."/>
            <person name="Parro V."/>
            <person name="Pohl T.M."/>
            <person name="Portetelle D."/>
            <person name="Porwollik S."/>
            <person name="Prescott A.M."/>
            <person name="Presecan E."/>
            <person name="Pujic P."/>
            <person name="Purnelle B."/>
            <person name="Rapoport G."/>
            <person name="Rey M."/>
            <person name="Reynolds S."/>
            <person name="Rieger M."/>
            <person name="Rivolta C."/>
            <person name="Rocha E."/>
            <person name="Roche B."/>
            <person name="Rose M."/>
            <person name="Sadaie Y."/>
            <person name="Sato T."/>
            <person name="Scanlan E."/>
            <person name="Schleich S."/>
            <person name="Schroeter R."/>
            <person name="Scoffone F."/>
            <person name="Sekiguchi J."/>
            <person name="Sekowska A."/>
            <person name="Seror S.J."/>
            <person name="Serror P."/>
            <person name="Shin B.-S."/>
            <person name="Soldo B."/>
            <person name="Sorokin A."/>
            <person name="Tacconi E."/>
            <person name="Takagi T."/>
            <person name="Takahashi H."/>
            <person name="Takemaru K."/>
            <person name="Takeuchi M."/>
            <person name="Tamakoshi A."/>
            <person name="Tanaka T."/>
            <person name="Terpstra P."/>
            <person name="Tognoni A."/>
            <person name="Tosato V."/>
            <person name="Uchiyama S."/>
            <person name="Vandenbol M."/>
            <person name="Vannier F."/>
            <person name="Vassarotti A."/>
            <person name="Viari A."/>
            <person name="Wambutt R."/>
            <person name="Wedler E."/>
            <person name="Wedler H."/>
            <person name="Weitzenegger T."/>
            <person name="Winters P."/>
            <person name="Wipat A."/>
            <person name="Yamamoto H."/>
            <person name="Yamane K."/>
            <person name="Yasumoto K."/>
            <person name="Yata K."/>
            <person name="Yoshida K."/>
            <person name="Yoshikawa H.-F."/>
            <person name="Zumstein E."/>
            <person name="Yoshikawa H."/>
            <person name="Danchin A."/>
        </authorList>
    </citation>
    <scope>NUCLEOTIDE SEQUENCE [LARGE SCALE GENOMIC DNA]</scope>
    <source>
        <strain>168</strain>
    </source>
</reference>
<evidence type="ECO:0000305" key="1"/>
<comment type="similarity">
    <text evidence="1">Belongs to the TelA family.</text>
</comment>
<keyword id="KW-1185">Reference proteome</keyword>
<name>YCEH_BACSU</name>
<accession>O34833</accession>
<gene>
    <name type="primary">yceH</name>
    <name type="ordered locus">BSU02940</name>
</gene>
<sequence length="363" mass="41673">MTTENQNPLVLDKNEEISQQKADDIRLQLRQEPEVKRLAQQIDVKNQMELLEYGKEPAVEISKFSDRILGMMKTTSVTDSGTMLTQLGKIMDRFDKNDFDEPKGLMAKIFKRGGSMIEKIFKKYQTLGGEIEKIHVEISKYKDEMTKTNYTLDEMYENNIKYYMELEKYVVAGQMKLEEMQSILPSYEEKAASGNQLAQMQLDTLRNGIQALEERVYDLDMARMVALQTAPQIRLLQRGNAKLIGKINSAFIITIPIFKNGIIQAVTVKRQKLVADSMSELDRRTNEMLKRNAENISSQSVEIARMAGRPSIDIETIESSWNTIVSGMQETKQIEEENKRLREDGARRIAQLQDNIKKAALQQ</sequence>